<comment type="similarity">
    <text evidence="2">Belongs to the protein prenyltransferase subunit alpha family.</text>
</comment>
<organism>
    <name type="scientific">Xenopus laevis</name>
    <name type="common">African clawed frog</name>
    <dbReference type="NCBI Taxonomy" id="8355"/>
    <lineage>
        <taxon>Eukaryota</taxon>
        <taxon>Metazoa</taxon>
        <taxon>Chordata</taxon>
        <taxon>Craniata</taxon>
        <taxon>Vertebrata</taxon>
        <taxon>Euteleostomi</taxon>
        <taxon>Amphibia</taxon>
        <taxon>Batrachia</taxon>
        <taxon>Anura</taxon>
        <taxon>Pipoidea</taxon>
        <taxon>Pipidae</taxon>
        <taxon>Xenopodinae</taxon>
        <taxon>Xenopus</taxon>
        <taxon>Xenopus</taxon>
    </lineage>
</organism>
<gene>
    <name type="primary">ptar1-b</name>
</gene>
<dbReference type="EMBL" id="BC130169">
    <property type="protein sequence ID" value="AAI30170.1"/>
    <property type="molecule type" value="mRNA"/>
</dbReference>
<dbReference type="SMR" id="A1L3L1"/>
<dbReference type="AGR" id="Xenbase:XB-GENE-6255541"/>
<dbReference type="Xenbase" id="XB-GENE-6255541">
    <property type="gene designation" value="ptar1.S"/>
</dbReference>
<dbReference type="OMA" id="CCNTEQR"/>
<dbReference type="Proteomes" id="UP000186698">
    <property type="component" value="Unplaced"/>
</dbReference>
<dbReference type="GO" id="GO:0005737">
    <property type="term" value="C:cytoplasm"/>
    <property type="evidence" value="ECO:0000318"/>
    <property type="project" value="GO_Central"/>
</dbReference>
<dbReference type="GO" id="GO:0008318">
    <property type="term" value="F:protein prenyltransferase activity"/>
    <property type="evidence" value="ECO:0007669"/>
    <property type="project" value="InterPro"/>
</dbReference>
<dbReference type="FunFam" id="1.25.40.120:FF:000012">
    <property type="entry name" value="Protein prenyltransferase alpha subunit repeat containing 1"/>
    <property type="match status" value="1"/>
</dbReference>
<dbReference type="Gene3D" id="1.25.40.120">
    <property type="entry name" value="Protein prenylyltransferase"/>
    <property type="match status" value="1"/>
</dbReference>
<dbReference type="InterPro" id="IPR002088">
    <property type="entry name" value="Prenyl_trans_a"/>
</dbReference>
<dbReference type="PANTHER" id="PTHR11129">
    <property type="entry name" value="PROTEIN FARNESYLTRANSFERASE ALPHA SUBUNIT/RAB GERANYLGERANYL TRANSFERASE ALPHA SUBUNIT"/>
    <property type="match status" value="1"/>
</dbReference>
<dbReference type="PANTHER" id="PTHR11129:SF3">
    <property type="entry name" value="PROTEIN PRENYLTRANSFERASE ALPHA SUBUNIT REPEAT-CONTAINING PROTEIN 1"/>
    <property type="match status" value="1"/>
</dbReference>
<dbReference type="Pfam" id="PF01239">
    <property type="entry name" value="PPTA"/>
    <property type="match status" value="4"/>
</dbReference>
<dbReference type="SUPFAM" id="SSF48439">
    <property type="entry name" value="Protein prenylyltransferase"/>
    <property type="match status" value="1"/>
</dbReference>
<dbReference type="PROSITE" id="PS51147">
    <property type="entry name" value="PFTA"/>
    <property type="match status" value="6"/>
</dbReference>
<evidence type="ECO:0000256" key="1">
    <source>
        <dbReference type="SAM" id="MobiDB-lite"/>
    </source>
</evidence>
<evidence type="ECO:0000305" key="2"/>
<reference key="1">
    <citation type="submission" date="2006-12" db="EMBL/GenBank/DDBJ databases">
        <authorList>
            <consortium name="NIH - Xenopus Gene Collection (XGC) project"/>
        </authorList>
    </citation>
    <scope>NUCLEOTIDE SEQUENCE [LARGE SCALE MRNA]</scope>
    <source>
        <tissue>Ovary</tissue>
    </source>
</reference>
<proteinExistence type="evidence at transcript level"/>
<name>PTR1B_XENLA</name>
<keyword id="KW-0637">Prenyltransferase</keyword>
<keyword id="KW-1185">Reference proteome</keyword>
<keyword id="KW-0677">Repeat</keyword>
<keyword id="KW-0808">Transferase</keyword>
<feature type="chain" id="PRO_0000316846" description="Protein prenyltransferase alpha subunit repeat-containing protein 1-B">
    <location>
        <begin position="1"/>
        <end position="431"/>
    </location>
</feature>
<feature type="repeat" description="PFTA 1">
    <location>
        <begin position="85"/>
        <end position="118"/>
    </location>
</feature>
<feature type="repeat" description="PFTA 2">
    <location>
        <begin position="120"/>
        <end position="153"/>
    </location>
</feature>
<feature type="repeat" description="PFTA 3">
    <location>
        <begin position="178"/>
        <end position="211"/>
    </location>
</feature>
<feature type="repeat" description="PFTA 4">
    <location>
        <begin position="217"/>
        <end position="250"/>
    </location>
</feature>
<feature type="repeat" description="PFTA 5">
    <location>
        <begin position="293"/>
        <end position="326"/>
    </location>
</feature>
<feature type="repeat" description="PFTA 6">
    <location>
        <begin position="394"/>
        <end position="431"/>
    </location>
</feature>
<feature type="region of interest" description="Disordered" evidence="1">
    <location>
        <begin position="363"/>
        <end position="383"/>
    </location>
</feature>
<feature type="non-terminal residue">
    <location>
        <position position="1"/>
    </location>
</feature>
<protein>
    <recommendedName>
        <fullName>Protein prenyltransferase alpha subunit repeat-containing protein 1-B</fullName>
    </recommendedName>
</protein>
<accession>A1L3L1</accession>
<sequence>AEWKEEVEVLVQRVVKDITGAFRRNPNIDEIGLIPCPEATYNRSPIVLVENKLGVESWCIKFLLPYVHNKLLLYRQKKLWLNRDELIDVTCTLLLLNPDFTTAWNVRKELIQSGTLNPVKDLQLGKLALTKFPKSPETWIHRRWVLQRVVQELVVAAVVGKDATCPETYERIQTIVQEEMHVCYEAAGRYPSNYNSWSHRIWVIQHLGNLNVKLLIDELSSTKHWVSMHVSDHSGFHYRQFLLKSLLCKTLKDSDNVTAVPDLIANEKNPCLPREGEAIWNQICFDLPYLLEEEMKLNRELLDSYPGHETLWCHRRQIFKLIHQLLLEQSQSATPQSTSASITDGSGNISHLSSTFQSYVTNPMDVDGMSDPNKQGYTQETKRLKRAPVQDSLSLDSELRFINCVLTNCCSPEQSRFAASYRKWLLSLQGY</sequence>